<evidence type="ECO:0000255" key="1">
    <source>
        <dbReference type="HAMAP-Rule" id="MF_00011"/>
    </source>
</evidence>
<dbReference type="EC" id="6.3.4.4" evidence="1"/>
<dbReference type="EMBL" id="AE017125">
    <property type="protein sequence ID" value="AAP77551.1"/>
    <property type="molecule type" value="Genomic_DNA"/>
</dbReference>
<dbReference type="RefSeq" id="WP_011115794.1">
    <property type="nucleotide sequence ID" value="NC_004917.1"/>
</dbReference>
<dbReference type="SMR" id="Q7VHL2"/>
<dbReference type="STRING" id="235279.HH_0954"/>
<dbReference type="KEGG" id="hhe:HH_0954"/>
<dbReference type="eggNOG" id="COG0104">
    <property type="taxonomic scope" value="Bacteria"/>
</dbReference>
<dbReference type="HOGENOM" id="CLU_029848_0_0_7"/>
<dbReference type="OrthoDB" id="9807553at2"/>
<dbReference type="UniPathway" id="UPA00075">
    <property type="reaction ID" value="UER00335"/>
</dbReference>
<dbReference type="Proteomes" id="UP000002495">
    <property type="component" value="Chromosome"/>
</dbReference>
<dbReference type="GO" id="GO:0005737">
    <property type="term" value="C:cytoplasm"/>
    <property type="evidence" value="ECO:0007669"/>
    <property type="project" value="UniProtKB-SubCell"/>
</dbReference>
<dbReference type="GO" id="GO:0004019">
    <property type="term" value="F:adenylosuccinate synthase activity"/>
    <property type="evidence" value="ECO:0007669"/>
    <property type="project" value="UniProtKB-UniRule"/>
</dbReference>
<dbReference type="GO" id="GO:0005525">
    <property type="term" value="F:GTP binding"/>
    <property type="evidence" value="ECO:0007669"/>
    <property type="project" value="UniProtKB-UniRule"/>
</dbReference>
<dbReference type="GO" id="GO:0000287">
    <property type="term" value="F:magnesium ion binding"/>
    <property type="evidence" value="ECO:0007669"/>
    <property type="project" value="UniProtKB-UniRule"/>
</dbReference>
<dbReference type="GO" id="GO:0044208">
    <property type="term" value="P:'de novo' AMP biosynthetic process"/>
    <property type="evidence" value="ECO:0007669"/>
    <property type="project" value="UniProtKB-UniRule"/>
</dbReference>
<dbReference type="GO" id="GO:0046040">
    <property type="term" value="P:IMP metabolic process"/>
    <property type="evidence" value="ECO:0007669"/>
    <property type="project" value="TreeGrafter"/>
</dbReference>
<dbReference type="CDD" id="cd03108">
    <property type="entry name" value="AdSS"/>
    <property type="match status" value="1"/>
</dbReference>
<dbReference type="FunFam" id="1.10.300.10:FF:000001">
    <property type="entry name" value="Adenylosuccinate synthetase"/>
    <property type="match status" value="1"/>
</dbReference>
<dbReference type="FunFam" id="3.90.170.10:FF:000001">
    <property type="entry name" value="Adenylosuccinate synthetase"/>
    <property type="match status" value="1"/>
</dbReference>
<dbReference type="Gene3D" id="3.40.440.10">
    <property type="entry name" value="Adenylosuccinate Synthetase, subunit A, domain 1"/>
    <property type="match status" value="1"/>
</dbReference>
<dbReference type="Gene3D" id="1.10.300.10">
    <property type="entry name" value="Adenylosuccinate Synthetase, subunit A, domain 2"/>
    <property type="match status" value="1"/>
</dbReference>
<dbReference type="Gene3D" id="3.90.170.10">
    <property type="entry name" value="Adenylosuccinate Synthetase, subunit A, domain 3"/>
    <property type="match status" value="1"/>
</dbReference>
<dbReference type="HAMAP" id="MF_00011">
    <property type="entry name" value="Adenylosucc_synth"/>
    <property type="match status" value="1"/>
</dbReference>
<dbReference type="InterPro" id="IPR018220">
    <property type="entry name" value="Adenylosuccin_syn_GTP-bd"/>
</dbReference>
<dbReference type="InterPro" id="IPR033128">
    <property type="entry name" value="Adenylosuccin_syn_Lys_AS"/>
</dbReference>
<dbReference type="InterPro" id="IPR042109">
    <property type="entry name" value="Adenylosuccinate_synth_dom1"/>
</dbReference>
<dbReference type="InterPro" id="IPR042110">
    <property type="entry name" value="Adenylosuccinate_synth_dom2"/>
</dbReference>
<dbReference type="InterPro" id="IPR042111">
    <property type="entry name" value="Adenylosuccinate_synth_dom3"/>
</dbReference>
<dbReference type="InterPro" id="IPR001114">
    <property type="entry name" value="Adenylosuccinate_synthetase"/>
</dbReference>
<dbReference type="InterPro" id="IPR027417">
    <property type="entry name" value="P-loop_NTPase"/>
</dbReference>
<dbReference type="NCBIfam" id="NF002223">
    <property type="entry name" value="PRK01117.1"/>
    <property type="match status" value="1"/>
</dbReference>
<dbReference type="NCBIfam" id="TIGR00184">
    <property type="entry name" value="purA"/>
    <property type="match status" value="1"/>
</dbReference>
<dbReference type="PANTHER" id="PTHR11846">
    <property type="entry name" value="ADENYLOSUCCINATE SYNTHETASE"/>
    <property type="match status" value="1"/>
</dbReference>
<dbReference type="PANTHER" id="PTHR11846:SF0">
    <property type="entry name" value="ADENYLOSUCCINATE SYNTHETASE"/>
    <property type="match status" value="1"/>
</dbReference>
<dbReference type="Pfam" id="PF00709">
    <property type="entry name" value="Adenylsucc_synt"/>
    <property type="match status" value="1"/>
</dbReference>
<dbReference type="SMART" id="SM00788">
    <property type="entry name" value="Adenylsucc_synt"/>
    <property type="match status" value="1"/>
</dbReference>
<dbReference type="SUPFAM" id="SSF52540">
    <property type="entry name" value="P-loop containing nucleoside triphosphate hydrolases"/>
    <property type="match status" value="1"/>
</dbReference>
<dbReference type="PROSITE" id="PS01266">
    <property type="entry name" value="ADENYLOSUCCIN_SYN_1"/>
    <property type="match status" value="1"/>
</dbReference>
<dbReference type="PROSITE" id="PS00513">
    <property type="entry name" value="ADENYLOSUCCIN_SYN_2"/>
    <property type="match status" value="1"/>
</dbReference>
<comment type="function">
    <text evidence="1">Plays an important role in the de novo pathway of purine nucleotide biosynthesis. Catalyzes the first committed step in the biosynthesis of AMP from IMP.</text>
</comment>
<comment type="catalytic activity">
    <reaction evidence="1">
        <text>IMP + L-aspartate + GTP = N(6)-(1,2-dicarboxyethyl)-AMP + GDP + phosphate + 2 H(+)</text>
        <dbReference type="Rhea" id="RHEA:15753"/>
        <dbReference type="ChEBI" id="CHEBI:15378"/>
        <dbReference type="ChEBI" id="CHEBI:29991"/>
        <dbReference type="ChEBI" id="CHEBI:37565"/>
        <dbReference type="ChEBI" id="CHEBI:43474"/>
        <dbReference type="ChEBI" id="CHEBI:57567"/>
        <dbReference type="ChEBI" id="CHEBI:58053"/>
        <dbReference type="ChEBI" id="CHEBI:58189"/>
        <dbReference type="EC" id="6.3.4.4"/>
    </reaction>
</comment>
<comment type="cofactor">
    <cofactor evidence="1">
        <name>Mg(2+)</name>
        <dbReference type="ChEBI" id="CHEBI:18420"/>
    </cofactor>
    <text evidence="1">Binds 1 Mg(2+) ion per subunit.</text>
</comment>
<comment type="pathway">
    <text evidence="1">Purine metabolism; AMP biosynthesis via de novo pathway; AMP from IMP: step 1/2.</text>
</comment>
<comment type="subunit">
    <text evidence="1">Homodimer.</text>
</comment>
<comment type="subcellular location">
    <subcellularLocation>
        <location evidence="1">Cytoplasm</location>
    </subcellularLocation>
</comment>
<comment type="similarity">
    <text evidence="1">Belongs to the adenylosuccinate synthetase family.</text>
</comment>
<reference key="1">
    <citation type="journal article" date="2003" name="Proc. Natl. Acad. Sci. U.S.A.">
        <title>The complete genome sequence of the carcinogenic bacterium Helicobacter hepaticus.</title>
        <authorList>
            <person name="Suerbaum S."/>
            <person name="Josenhans C."/>
            <person name="Sterzenbach T."/>
            <person name="Drescher B."/>
            <person name="Brandt P."/>
            <person name="Bell M."/>
            <person name="Droege M."/>
            <person name="Fartmann B."/>
            <person name="Fischer H.-P."/>
            <person name="Ge Z."/>
            <person name="Hoerster A."/>
            <person name="Holland R."/>
            <person name="Klein K."/>
            <person name="Koenig J."/>
            <person name="Macko L."/>
            <person name="Mendz G.L."/>
            <person name="Nyakatura G."/>
            <person name="Schauer D.B."/>
            <person name="Shen Z."/>
            <person name="Weber J."/>
            <person name="Frosch M."/>
            <person name="Fox J.G."/>
        </authorList>
    </citation>
    <scope>NUCLEOTIDE SEQUENCE [LARGE SCALE GENOMIC DNA]</scope>
    <source>
        <strain>ATCC 51449 / 3B1</strain>
    </source>
</reference>
<accession>Q7VHL2</accession>
<sequence length="415" mass="45737">MADLIVGIQWGDEGKGKVVDALAGEYDYVVRYQGGHNAGHTIVVDSKKIALHLLPSGILYERCKNVIGNGVVINLEQLLNESKAFGNLQGRLFISDRAHIILPYHEILDIAKEKSRQSAAIGTTGKGIGPCYGDKVSRNGVRLMDLKNLDKLREKVDSIYQHIQYVQTLYNVELPSVQSVMEHIESIAPQILPFVTDTTQLLWAAQNRGEKILCEGAQGSMLDIDHGTYPFVTSSTTIASGACSGSGLAPRDIARVIGVAKAYCTRVGNGMFPTQEDGEIGERLRQAGGEFGTTTGRARRCGWFDAVAVRYACRLNGCESLSIMKLDVLDGFERVKVCVGYEYEGKQIDYIPTDYDNVKPIYREFVGWDKTCGVRTFNALPSQAQHYIKELEKIIGVKISMVSTSPERDDMIMLG</sequence>
<keyword id="KW-0963">Cytoplasm</keyword>
<keyword id="KW-0342">GTP-binding</keyword>
<keyword id="KW-0436">Ligase</keyword>
<keyword id="KW-0460">Magnesium</keyword>
<keyword id="KW-0479">Metal-binding</keyword>
<keyword id="KW-0547">Nucleotide-binding</keyword>
<keyword id="KW-0658">Purine biosynthesis</keyword>
<keyword id="KW-1185">Reference proteome</keyword>
<organism>
    <name type="scientific">Helicobacter hepaticus (strain ATCC 51449 / 3B1)</name>
    <dbReference type="NCBI Taxonomy" id="235279"/>
    <lineage>
        <taxon>Bacteria</taxon>
        <taxon>Pseudomonadati</taxon>
        <taxon>Campylobacterota</taxon>
        <taxon>Epsilonproteobacteria</taxon>
        <taxon>Campylobacterales</taxon>
        <taxon>Helicobacteraceae</taxon>
        <taxon>Helicobacter</taxon>
    </lineage>
</organism>
<feature type="chain" id="PRO_0000095185" description="Adenylosuccinate synthetase">
    <location>
        <begin position="1"/>
        <end position="415"/>
    </location>
</feature>
<feature type="active site" description="Proton acceptor" evidence="1">
    <location>
        <position position="12"/>
    </location>
</feature>
<feature type="active site" description="Proton donor" evidence="1">
    <location>
        <position position="40"/>
    </location>
</feature>
<feature type="binding site" evidence="1">
    <location>
        <begin position="11"/>
        <end position="17"/>
    </location>
    <ligand>
        <name>GTP</name>
        <dbReference type="ChEBI" id="CHEBI:37565"/>
    </ligand>
</feature>
<feature type="binding site" description="in other chain" evidence="1">
    <location>
        <begin position="12"/>
        <end position="15"/>
    </location>
    <ligand>
        <name>IMP</name>
        <dbReference type="ChEBI" id="CHEBI:58053"/>
        <note>ligand shared between dimeric partners</note>
    </ligand>
</feature>
<feature type="binding site" evidence="1">
    <location>
        <position position="12"/>
    </location>
    <ligand>
        <name>Mg(2+)</name>
        <dbReference type="ChEBI" id="CHEBI:18420"/>
    </ligand>
</feature>
<feature type="binding site" description="in other chain" evidence="1">
    <location>
        <begin position="37"/>
        <end position="40"/>
    </location>
    <ligand>
        <name>IMP</name>
        <dbReference type="ChEBI" id="CHEBI:58053"/>
        <note>ligand shared between dimeric partners</note>
    </ligand>
</feature>
<feature type="binding site" evidence="1">
    <location>
        <begin position="39"/>
        <end position="41"/>
    </location>
    <ligand>
        <name>GTP</name>
        <dbReference type="ChEBI" id="CHEBI:37565"/>
    </ligand>
</feature>
<feature type="binding site" evidence="1">
    <location>
        <position position="39"/>
    </location>
    <ligand>
        <name>Mg(2+)</name>
        <dbReference type="ChEBI" id="CHEBI:18420"/>
    </ligand>
</feature>
<feature type="binding site" description="in other chain" evidence="1">
    <location>
        <position position="124"/>
    </location>
    <ligand>
        <name>IMP</name>
        <dbReference type="ChEBI" id="CHEBI:58053"/>
        <note>ligand shared between dimeric partners</note>
    </ligand>
</feature>
<feature type="binding site" evidence="1">
    <location>
        <position position="138"/>
    </location>
    <ligand>
        <name>IMP</name>
        <dbReference type="ChEBI" id="CHEBI:58053"/>
        <note>ligand shared between dimeric partners</note>
    </ligand>
</feature>
<feature type="binding site" description="in other chain" evidence="1">
    <location>
        <position position="218"/>
    </location>
    <ligand>
        <name>IMP</name>
        <dbReference type="ChEBI" id="CHEBI:58053"/>
        <note>ligand shared between dimeric partners</note>
    </ligand>
</feature>
<feature type="binding site" description="in other chain" evidence="1">
    <location>
        <position position="233"/>
    </location>
    <ligand>
        <name>IMP</name>
        <dbReference type="ChEBI" id="CHEBI:58053"/>
        <note>ligand shared between dimeric partners</note>
    </ligand>
</feature>
<feature type="binding site" evidence="1">
    <location>
        <begin position="293"/>
        <end position="299"/>
    </location>
    <ligand>
        <name>substrate</name>
    </ligand>
</feature>
<feature type="binding site" description="in other chain" evidence="1">
    <location>
        <position position="297"/>
    </location>
    <ligand>
        <name>IMP</name>
        <dbReference type="ChEBI" id="CHEBI:58053"/>
        <note>ligand shared between dimeric partners</note>
    </ligand>
</feature>
<feature type="binding site" evidence="1">
    <location>
        <position position="299"/>
    </location>
    <ligand>
        <name>GTP</name>
        <dbReference type="ChEBI" id="CHEBI:37565"/>
    </ligand>
</feature>
<feature type="binding site" evidence="1">
    <location>
        <begin position="325"/>
        <end position="327"/>
    </location>
    <ligand>
        <name>GTP</name>
        <dbReference type="ChEBI" id="CHEBI:37565"/>
    </ligand>
</feature>
<feature type="binding site" evidence="1">
    <location>
        <begin position="403"/>
        <end position="405"/>
    </location>
    <ligand>
        <name>GTP</name>
        <dbReference type="ChEBI" id="CHEBI:37565"/>
    </ligand>
</feature>
<protein>
    <recommendedName>
        <fullName evidence="1">Adenylosuccinate synthetase</fullName>
        <shortName evidence="1">AMPSase</shortName>
        <shortName evidence="1">AdSS</shortName>
        <ecNumber evidence="1">6.3.4.4</ecNumber>
    </recommendedName>
    <alternativeName>
        <fullName evidence="1">IMP--aspartate ligase</fullName>
    </alternativeName>
</protein>
<name>PURA_HELHP</name>
<proteinExistence type="inferred from homology"/>
<gene>
    <name evidence="1" type="primary">purA</name>
    <name type="ordered locus">HH_0954</name>
</gene>